<accession>A2S877</accession>
<comment type="function">
    <text evidence="1">Transfers a succinyl group from succinyl-CoA to L-homoserine, forming succinyl-L-homoserine.</text>
</comment>
<comment type="catalytic activity">
    <reaction evidence="1">
        <text>L-homoserine + succinyl-CoA = O-succinyl-L-homoserine + CoA</text>
        <dbReference type="Rhea" id="RHEA:22008"/>
        <dbReference type="ChEBI" id="CHEBI:57287"/>
        <dbReference type="ChEBI" id="CHEBI:57292"/>
        <dbReference type="ChEBI" id="CHEBI:57476"/>
        <dbReference type="ChEBI" id="CHEBI:57661"/>
        <dbReference type="EC" id="2.3.1.46"/>
    </reaction>
</comment>
<comment type="pathway">
    <text evidence="1">Amino-acid biosynthesis; L-methionine biosynthesis via de novo pathway; O-succinyl-L-homoserine from L-homoserine: step 1/1.</text>
</comment>
<comment type="subunit">
    <text evidence="1">Homodimer.</text>
</comment>
<comment type="subcellular location">
    <subcellularLocation>
        <location evidence="1">Cytoplasm</location>
    </subcellularLocation>
</comment>
<comment type="similarity">
    <text evidence="1">Belongs to the AB hydrolase superfamily. MetX family.</text>
</comment>
<name>METXS_BURM9</name>
<feature type="chain" id="PRO_1000021871" description="Homoserine O-succinyltransferase">
    <location>
        <begin position="1"/>
        <end position="381"/>
    </location>
</feature>
<feature type="domain" description="AB hydrolase-1" evidence="1">
    <location>
        <begin position="45"/>
        <end position="360"/>
    </location>
</feature>
<feature type="active site" description="Nucleophile" evidence="1">
    <location>
        <position position="151"/>
    </location>
</feature>
<feature type="active site" evidence="1">
    <location>
        <position position="321"/>
    </location>
</feature>
<feature type="active site" evidence="1">
    <location>
        <position position="354"/>
    </location>
</feature>
<feature type="binding site" evidence="1">
    <location>
        <position position="221"/>
    </location>
    <ligand>
        <name>substrate</name>
    </ligand>
</feature>
<feature type="binding site" evidence="1">
    <location>
        <position position="355"/>
    </location>
    <ligand>
        <name>substrate</name>
    </ligand>
</feature>
<feature type="site" description="Important for acyl-CoA specificity" evidence="1">
    <location>
        <position position="323"/>
    </location>
</feature>
<evidence type="ECO:0000255" key="1">
    <source>
        <dbReference type="HAMAP-Rule" id="MF_00296"/>
    </source>
</evidence>
<sequence length="381" mass="42018">MESIGVVAPHTMHFAEPLRLQSGSVLGNYQLVVETYGELNAARSNAVLVCHALNASHHVAGVYADDPRSTGWWDNMVGPGKPLDTNRFFVIGVNNLGSCFGSTGPMSIDPATGTPYGARFPVVTVEDWVHAQARVADAFGIERFAAVMGGSLGGMQALAWSLLYPERVAHCIDIASTPKLSAQNIAFNEVARSAILSDPDFHGGDYYAHGVKPRRGLRVARMIGHITYLSDDDMAEKFGRALRRADGALDAYNFNFDVEFEVESYLRYQGDKFADYFDANTYLLITRALDYFDPAKAFNGDLSAALAHTKAKYLIASFMTDWRFAPARSREIVKALLDNRRSVSYAEIDAPHGHDAFLLDDARYHNLVRAYYERIAEEVGA</sequence>
<organism>
    <name type="scientific">Burkholderia mallei (strain NCTC 10229)</name>
    <dbReference type="NCBI Taxonomy" id="412022"/>
    <lineage>
        <taxon>Bacteria</taxon>
        <taxon>Pseudomonadati</taxon>
        <taxon>Pseudomonadota</taxon>
        <taxon>Betaproteobacteria</taxon>
        <taxon>Burkholderiales</taxon>
        <taxon>Burkholderiaceae</taxon>
        <taxon>Burkholderia</taxon>
        <taxon>pseudomallei group</taxon>
    </lineage>
</organism>
<protein>
    <recommendedName>
        <fullName evidence="1">Homoserine O-succinyltransferase</fullName>
        <shortName evidence="1">HST</shortName>
        <ecNumber evidence="1">2.3.1.46</ecNumber>
    </recommendedName>
    <alternativeName>
        <fullName evidence="1">Homoserine transsuccinylase</fullName>
        <shortName evidence="1">HTS</shortName>
    </alternativeName>
</protein>
<proteinExistence type="inferred from homology"/>
<reference key="1">
    <citation type="journal article" date="2010" name="Genome Biol. Evol.">
        <title>Continuing evolution of Burkholderia mallei through genome reduction and large-scale rearrangements.</title>
        <authorList>
            <person name="Losada L."/>
            <person name="Ronning C.M."/>
            <person name="DeShazer D."/>
            <person name="Woods D."/>
            <person name="Fedorova N."/>
            <person name="Kim H.S."/>
            <person name="Shabalina S.A."/>
            <person name="Pearson T.R."/>
            <person name="Brinkac L."/>
            <person name="Tan P."/>
            <person name="Nandi T."/>
            <person name="Crabtree J."/>
            <person name="Badger J."/>
            <person name="Beckstrom-Sternberg S."/>
            <person name="Saqib M."/>
            <person name="Schutzer S.E."/>
            <person name="Keim P."/>
            <person name="Nierman W.C."/>
        </authorList>
    </citation>
    <scope>NUCLEOTIDE SEQUENCE [LARGE SCALE GENOMIC DNA]</scope>
    <source>
        <strain>NCTC 10229</strain>
    </source>
</reference>
<dbReference type="EC" id="2.3.1.46" evidence="1"/>
<dbReference type="EMBL" id="CP000546">
    <property type="protein sequence ID" value="ABN01768.1"/>
    <property type="molecule type" value="Genomic_DNA"/>
</dbReference>
<dbReference type="SMR" id="A2S877"/>
<dbReference type="ESTHER" id="burma-metx">
    <property type="family name" value="Homoserine_transacetylase"/>
</dbReference>
<dbReference type="KEGG" id="bml:BMA10229_A2182"/>
<dbReference type="HOGENOM" id="CLU_028760_1_2_4"/>
<dbReference type="UniPathway" id="UPA00051">
    <property type="reaction ID" value="UER00075"/>
</dbReference>
<dbReference type="Proteomes" id="UP000002283">
    <property type="component" value="Chromosome I"/>
</dbReference>
<dbReference type="GO" id="GO:0005737">
    <property type="term" value="C:cytoplasm"/>
    <property type="evidence" value="ECO:0007669"/>
    <property type="project" value="UniProtKB-SubCell"/>
</dbReference>
<dbReference type="GO" id="GO:0004414">
    <property type="term" value="F:homoserine O-acetyltransferase activity"/>
    <property type="evidence" value="ECO:0007669"/>
    <property type="project" value="TreeGrafter"/>
</dbReference>
<dbReference type="GO" id="GO:0008899">
    <property type="term" value="F:homoserine O-succinyltransferase activity"/>
    <property type="evidence" value="ECO:0007669"/>
    <property type="project" value="UniProtKB-UniRule"/>
</dbReference>
<dbReference type="GO" id="GO:0009092">
    <property type="term" value="P:homoserine metabolic process"/>
    <property type="evidence" value="ECO:0007669"/>
    <property type="project" value="TreeGrafter"/>
</dbReference>
<dbReference type="GO" id="GO:0009086">
    <property type="term" value="P:methionine biosynthetic process"/>
    <property type="evidence" value="ECO:0007669"/>
    <property type="project" value="UniProtKB-UniRule"/>
</dbReference>
<dbReference type="FunFam" id="1.10.1740.110:FF:000001">
    <property type="entry name" value="Homoserine O-acetyltransferase"/>
    <property type="match status" value="1"/>
</dbReference>
<dbReference type="Gene3D" id="1.10.1740.110">
    <property type="match status" value="1"/>
</dbReference>
<dbReference type="Gene3D" id="3.40.50.1820">
    <property type="entry name" value="alpha/beta hydrolase"/>
    <property type="match status" value="1"/>
</dbReference>
<dbReference type="HAMAP" id="MF_00296">
    <property type="entry name" value="MetX_acyltransf"/>
    <property type="match status" value="1"/>
</dbReference>
<dbReference type="InterPro" id="IPR000073">
    <property type="entry name" value="AB_hydrolase_1"/>
</dbReference>
<dbReference type="InterPro" id="IPR029058">
    <property type="entry name" value="AB_hydrolase_fold"/>
</dbReference>
<dbReference type="InterPro" id="IPR008220">
    <property type="entry name" value="HAT_MetX-like"/>
</dbReference>
<dbReference type="NCBIfam" id="TIGR01392">
    <property type="entry name" value="homoserO_Ac_trn"/>
    <property type="match status" value="1"/>
</dbReference>
<dbReference type="NCBIfam" id="NF001209">
    <property type="entry name" value="PRK00175.1"/>
    <property type="match status" value="1"/>
</dbReference>
<dbReference type="PANTHER" id="PTHR32268">
    <property type="entry name" value="HOMOSERINE O-ACETYLTRANSFERASE"/>
    <property type="match status" value="1"/>
</dbReference>
<dbReference type="PANTHER" id="PTHR32268:SF11">
    <property type="entry name" value="HOMOSERINE O-ACETYLTRANSFERASE"/>
    <property type="match status" value="1"/>
</dbReference>
<dbReference type="Pfam" id="PF00561">
    <property type="entry name" value="Abhydrolase_1"/>
    <property type="match status" value="1"/>
</dbReference>
<dbReference type="PIRSF" id="PIRSF000443">
    <property type="entry name" value="Homoser_Ac_trans"/>
    <property type="match status" value="1"/>
</dbReference>
<dbReference type="SUPFAM" id="SSF53474">
    <property type="entry name" value="alpha/beta-Hydrolases"/>
    <property type="match status" value="1"/>
</dbReference>
<gene>
    <name evidence="1" type="primary">metXS</name>
    <name type="ordered locus">BMA10229_A2182</name>
</gene>
<keyword id="KW-0012">Acyltransferase</keyword>
<keyword id="KW-0028">Amino-acid biosynthesis</keyword>
<keyword id="KW-0963">Cytoplasm</keyword>
<keyword id="KW-0486">Methionine biosynthesis</keyword>
<keyword id="KW-0808">Transferase</keyword>